<sequence length="375" mass="41793">MEEEIAALVIDNGSGMCKAGFAGDDAPRAVFPSIVGRPRHQGVMVGMGQKDSYVGDEAQSKRGILTLKYPIEHGIVTNWDDMEKIWHHTFYNELRVAPEEHPVLLTEAPLNPKANREKMTQIMFETFNTPAMYVAIQAVLSLYASGRTTGIVMDSGDGVTHTVPIYEGYALPHAILRLDLAGRDLTDYLMKILTERGYSFTTTAEREIVRDIKEKLCYVALDFEQEMATAASSSSLEKSYELPDGQVITIGNERFRCPEALFQPSFLGMESCGIHETTFNSIMKCDVDIRKDLYANTVLSGGTTMYPGIADRMQKEITALAPSTMKIKIIAPPERKYSVWIGGSILASLSTFQQMWISKQEYDESGPSIVHRKCF</sequence>
<accession>P63261</accession>
<accession>A8K7C2</accession>
<accession>P02571</accession>
<accession>P14104</accession>
<accession>P99022</accession>
<accession>Q5U032</accession>
<accession>Q96E67</accession>
<dbReference type="EC" id="3.6.4.-" evidence="2"/>
<dbReference type="EMBL" id="X04098">
    <property type="protein sequence ID" value="CAA27723.1"/>
    <property type="molecule type" value="mRNA"/>
</dbReference>
<dbReference type="EMBL" id="M19283">
    <property type="protein sequence ID" value="AAA51579.1"/>
    <property type="molecule type" value="Genomic_DNA"/>
</dbReference>
<dbReference type="EMBL" id="AK291937">
    <property type="protein sequence ID" value="BAF84626.1"/>
    <property type="molecule type" value="mRNA"/>
</dbReference>
<dbReference type="EMBL" id="BT019856">
    <property type="protein sequence ID" value="AAV38659.1"/>
    <property type="molecule type" value="mRNA"/>
</dbReference>
<dbReference type="EMBL" id="BC000292">
    <property type="protein sequence ID" value="AAH00292.1"/>
    <property type="molecule type" value="mRNA"/>
</dbReference>
<dbReference type="EMBL" id="BC001920">
    <property type="protein sequence ID" value="AAH01920.1"/>
    <property type="molecule type" value="mRNA"/>
</dbReference>
<dbReference type="EMBL" id="BC007442">
    <property type="protein sequence ID" value="AAH07442.1"/>
    <property type="molecule type" value="mRNA"/>
</dbReference>
<dbReference type="EMBL" id="BC009848">
    <property type="protein sequence ID" value="AAH09848.1"/>
    <property type="molecule type" value="mRNA"/>
</dbReference>
<dbReference type="EMBL" id="BC010999">
    <property type="protein sequence ID" value="AAH10999.1"/>
    <property type="molecule type" value="mRNA"/>
</dbReference>
<dbReference type="EMBL" id="BC012050">
    <property type="protein sequence ID" value="AAH12050.1"/>
    <property type="molecule type" value="mRNA"/>
</dbReference>
<dbReference type="EMBL" id="BC015005">
    <property type="protein sequence ID" value="AAH15005.1"/>
    <property type="molecule type" value="mRNA"/>
</dbReference>
<dbReference type="EMBL" id="BC015695">
    <property type="protein sequence ID" value="AAH15695.1"/>
    <property type="molecule type" value="mRNA"/>
</dbReference>
<dbReference type="EMBL" id="BC015779">
    <property type="protein sequence ID" value="AAH15779.1"/>
    <property type="molecule type" value="mRNA"/>
</dbReference>
<dbReference type="EMBL" id="BC018774">
    <property type="protein sequence ID" value="AAH18774.1"/>
    <property type="molecule type" value="mRNA"/>
</dbReference>
<dbReference type="EMBL" id="BC053572">
    <property type="protein sequence ID" value="AAH53572.1"/>
    <property type="molecule type" value="mRNA"/>
</dbReference>
<dbReference type="EMBL" id="M16247">
    <property type="protein sequence ID" value="AAA51580.1"/>
    <property type="molecule type" value="mRNA"/>
</dbReference>
<dbReference type="CCDS" id="CCDS11782.1"/>
<dbReference type="PIR" id="A28098">
    <property type="entry name" value="ATHUG"/>
</dbReference>
<dbReference type="PIR" id="JC5818">
    <property type="entry name" value="JC5818"/>
</dbReference>
<dbReference type="RefSeq" id="NP_001186883.1">
    <property type="nucleotide sequence ID" value="NM_001199954.3"/>
</dbReference>
<dbReference type="RefSeq" id="NP_001605.1">
    <property type="nucleotide sequence ID" value="NM_001614.5"/>
</dbReference>
<dbReference type="PDB" id="5JLH">
    <property type="method" value="EM"/>
    <property type="resolution" value="3.90 A"/>
    <property type="chains" value="A/B/C/D/E=2-375"/>
</dbReference>
<dbReference type="PDB" id="6CXI">
    <property type="method" value="EM"/>
    <property type="resolution" value="11.00 A"/>
    <property type="chains" value="A/B/C/D/E=1-375"/>
</dbReference>
<dbReference type="PDB" id="6CXJ">
    <property type="method" value="EM"/>
    <property type="resolution" value="11.00 A"/>
    <property type="chains" value="A/B/C/D/E=1-375"/>
</dbReference>
<dbReference type="PDB" id="6G2T">
    <property type="method" value="EM"/>
    <property type="resolution" value="9.00 A"/>
    <property type="chains" value="A/B/C/D/E/F=1-375"/>
</dbReference>
<dbReference type="PDB" id="6V62">
    <property type="method" value="X-ray"/>
    <property type="resolution" value="2.36 A"/>
    <property type="chains" value="Y=66-88"/>
</dbReference>
<dbReference type="PDB" id="6V63">
    <property type="method" value="X-ray"/>
    <property type="resolution" value="2.02 A"/>
    <property type="chains" value="Y/Z=66-88"/>
</dbReference>
<dbReference type="PDB" id="6WK1">
    <property type="method" value="X-ray"/>
    <property type="resolution" value="1.89 A"/>
    <property type="chains" value="Y/Z=66-88"/>
</dbReference>
<dbReference type="PDB" id="6WK2">
    <property type="method" value="X-ray"/>
    <property type="resolution" value="1.76 A"/>
    <property type="chains" value="C/Y=66-88"/>
</dbReference>
<dbReference type="PDB" id="7NVM">
    <property type="method" value="EM"/>
    <property type="resolution" value="3.10 A"/>
    <property type="chains" value="K=1-375"/>
</dbReference>
<dbReference type="PDB" id="8DNF">
    <property type="method" value="EM"/>
    <property type="resolution" value="3.38 A"/>
    <property type="chains" value="A/B/C/D=2-375"/>
</dbReference>
<dbReference type="PDBsum" id="5JLH"/>
<dbReference type="PDBsum" id="6CXI"/>
<dbReference type="PDBsum" id="6CXJ"/>
<dbReference type="PDBsum" id="6G2T"/>
<dbReference type="PDBsum" id="6V62"/>
<dbReference type="PDBsum" id="6V63"/>
<dbReference type="PDBsum" id="6WK1"/>
<dbReference type="PDBsum" id="6WK2"/>
<dbReference type="PDBsum" id="7NVM"/>
<dbReference type="PDBsum" id="8DNF"/>
<dbReference type="EMDB" id="EMD-12606"/>
<dbReference type="EMDB" id="EMD-21073"/>
<dbReference type="EMDB" id="EMD-27565"/>
<dbReference type="EMDB" id="EMD-4346"/>
<dbReference type="EMDB" id="EMD-7780"/>
<dbReference type="EMDB" id="EMD-7781"/>
<dbReference type="EMDB" id="EMD-8164"/>
<dbReference type="EMDB" id="EMD-8165"/>
<dbReference type="SMR" id="P63261"/>
<dbReference type="BioGRID" id="106586">
    <property type="interactions" value="494"/>
</dbReference>
<dbReference type="CORUM" id="P63261"/>
<dbReference type="FunCoup" id="P63261">
    <property type="interactions" value="2942"/>
</dbReference>
<dbReference type="IntAct" id="P63261">
    <property type="interactions" value="236"/>
</dbReference>
<dbReference type="MINT" id="P63261"/>
<dbReference type="STRING" id="9606.ENSP00000458162"/>
<dbReference type="DrugBank" id="DB11638">
    <property type="generic name" value="Artenimol"/>
</dbReference>
<dbReference type="DrugBank" id="DB09130">
    <property type="generic name" value="Copper"/>
</dbReference>
<dbReference type="GlyCosmos" id="P63261">
    <property type="glycosylation" value="5 sites, 1 glycan"/>
</dbReference>
<dbReference type="GlyGen" id="P63261">
    <property type="glycosylation" value="10 sites, 1 N-linked glycan (1 site), 1 O-linked glycan (9 sites)"/>
</dbReference>
<dbReference type="iPTMnet" id="P63261"/>
<dbReference type="MetOSite" id="P63261"/>
<dbReference type="PhosphoSitePlus" id="P63261"/>
<dbReference type="SwissPalm" id="P63261"/>
<dbReference type="BioMuta" id="ACTG1"/>
<dbReference type="DMDM" id="54036678"/>
<dbReference type="OGP" id="P63261"/>
<dbReference type="REPRODUCTION-2DPAGE" id="P63261"/>
<dbReference type="jPOST" id="P63261"/>
<dbReference type="MassIVE" id="P63261"/>
<dbReference type="PaxDb" id="9606-ENSP00000458162"/>
<dbReference type="PeptideAtlas" id="P63261"/>
<dbReference type="PRIDE" id="P63261"/>
<dbReference type="ProteomicsDB" id="57514"/>
<dbReference type="Pumba" id="P63261"/>
<dbReference type="TopDownProteomics" id="P63261"/>
<dbReference type="Antibodypedia" id="32827">
    <property type="antibodies" value="370 antibodies from 35 providers"/>
</dbReference>
<dbReference type="DNASU" id="71"/>
<dbReference type="Ensembl" id="ENST00000570382.2">
    <property type="protein sequence ID" value="ENSP00000466346.2"/>
    <property type="gene ID" value="ENSG00000184009.13"/>
</dbReference>
<dbReference type="Ensembl" id="ENST00000571721.6">
    <property type="protein sequence ID" value="ENSP00000460660.2"/>
    <property type="gene ID" value="ENSG00000184009.13"/>
</dbReference>
<dbReference type="Ensembl" id="ENST00000573283.7">
    <property type="protein sequence ID" value="ENSP00000458435.1"/>
    <property type="gene ID" value="ENSG00000184009.13"/>
</dbReference>
<dbReference type="Ensembl" id="ENST00000575087.5">
    <property type="protein sequence ID" value="ENSP00000459124.1"/>
    <property type="gene ID" value="ENSG00000184009.13"/>
</dbReference>
<dbReference type="Ensembl" id="ENST00000575659.6">
    <property type="protein sequence ID" value="ENSP00000459119.2"/>
    <property type="gene ID" value="ENSG00000184009.13"/>
</dbReference>
<dbReference type="Ensembl" id="ENST00000575842.5">
    <property type="protein sequence ID" value="ENSP00000458162.1"/>
    <property type="gene ID" value="ENSG00000184009.13"/>
</dbReference>
<dbReference type="Ensembl" id="ENST00000575994.6">
    <property type="protein sequence ID" value="ENSP00000460464.2"/>
    <property type="gene ID" value="ENSG00000184009.13"/>
</dbReference>
<dbReference type="Ensembl" id="ENST00000576544.6">
    <property type="protein sequence ID" value="ENSP00000461672.1"/>
    <property type="gene ID" value="ENSG00000184009.13"/>
</dbReference>
<dbReference type="Ensembl" id="ENST00000615544.5">
    <property type="protein sequence ID" value="ENSP00000477968.1"/>
    <property type="gene ID" value="ENSG00000184009.13"/>
</dbReference>
<dbReference type="Ensembl" id="ENST00000679480.1">
    <property type="protein sequence ID" value="ENSP00000506201.1"/>
    <property type="gene ID" value="ENSG00000184009.13"/>
</dbReference>
<dbReference type="Ensembl" id="ENST00000679778.1">
    <property type="protein sequence ID" value="ENSP00000505235.1"/>
    <property type="gene ID" value="ENSG00000184009.13"/>
</dbReference>
<dbReference type="Ensembl" id="ENST00000680227.1">
    <property type="protein sequence ID" value="ENSP00000506253.1"/>
    <property type="gene ID" value="ENSG00000184009.13"/>
</dbReference>
<dbReference type="Ensembl" id="ENST00000680727.1">
    <property type="protein sequence ID" value="ENSP00000505193.1"/>
    <property type="gene ID" value="ENSG00000184009.13"/>
</dbReference>
<dbReference type="Ensembl" id="ENST00000681052.1">
    <property type="protein sequence ID" value="ENSP00000505060.1"/>
    <property type="gene ID" value="ENSG00000184009.13"/>
</dbReference>
<dbReference type="Ensembl" id="ENST00000681842.1">
    <property type="protein sequence ID" value="ENSP00000506126.1"/>
    <property type="gene ID" value="ENSG00000184009.13"/>
</dbReference>
<dbReference type="Ensembl" id="ENST00000707466.1">
    <property type="protein sequence ID" value="ENSP00000516869.1"/>
    <property type="gene ID" value="ENSG00000291420.1"/>
</dbReference>
<dbReference type="Ensembl" id="ENST00000707467.1">
    <property type="protein sequence ID" value="ENSP00000516870.1"/>
    <property type="gene ID" value="ENSG00000291420.1"/>
</dbReference>
<dbReference type="Ensembl" id="ENST00000707468.1">
    <property type="protein sequence ID" value="ENSP00000516871.1"/>
    <property type="gene ID" value="ENSG00000291420.1"/>
</dbReference>
<dbReference type="Ensembl" id="ENST00000707469.1">
    <property type="protein sequence ID" value="ENSP00000516872.1"/>
    <property type="gene ID" value="ENSG00000291420.1"/>
</dbReference>
<dbReference type="Ensembl" id="ENST00000707470.1">
    <property type="protein sequence ID" value="ENSP00000516873.1"/>
    <property type="gene ID" value="ENSG00000291420.1"/>
</dbReference>
<dbReference type="Ensembl" id="ENST00000707471.1">
    <property type="protein sequence ID" value="ENSP00000516874.1"/>
    <property type="gene ID" value="ENSG00000291420.1"/>
</dbReference>
<dbReference type="Ensembl" id="ENST00000707472.1">
    <property type="protein sequence ID" value="ENSP00000516875.1"/>
    <property type="gene ID" value="ENSG00000291420.1"/>
</dbReference>
<dbReference type="Ensembl" id="ENST00000707473.1">
    <property type="protein sequence ID" value="ENSP00000516876.1"/>
    <property type="gene ID" value="ENSG00000291420.1"/>
</dbReference>
<dbReference type="Ensembl" id="ENST00000707474.1">
    <property type="protein sequence ID" value="ENSP00000516877.1"/>
    <property type="gene ID" value="ENSG00000291420.1"/>
</dbReference>
<dbReference type="Ensembl" id="ENST00000707479.1">
    <property type="protein sequence ID" value="ENSP00000516879.1"/>
    <property type="gene ID" value="ENSG00000291420.1"/>
</dbReference>
<dbReference type="Ensembl" id="ENST00000707482.1">
    <property type="protein sequence ID" value="ENSP00000516881.1"/>
    <property type="gene ID" value="ENSG00000291420.1"/>
</dbReference>
<dbReference type="Ensembl" id="ENST00000707485.1">
    <property type="protein sequence ID" value="ENSP00000516882.1"/>
    <property type="gene ID" value="ENSG00000291420.1"/>
</dbReference>
<dbReference type="Ensembl" id="ENST00000707487.1">
    <property type="protein sequence ID" value="ENSP00000516884.1"/>
    <property type="gene ID" value="ENSG00000291420.1"/>
</dbReference>
<dbReference type="Ensembl" id="ENST00000707489.1">
    <property type="protein sequence ID" value="ENSP00000516886.1"/>
    <property type="gene ID" value="ENSG00000291420.1"/>
</dbReference>
<dbReference type="Ensembl" id="ENST00000707490.1">
    <property type="protein sequence ID" value="ENSP00000516887.1"/>
    <property type="gene ID" value="ENSG00000291420.1"/>
</dbReference>
<dbReference type="GeneID" id="71"/>
<dbReference type="KEGG" id="hsa:71"/>
<dbReference type="MANE-Select" id="ENST00000573283.7">
    <property type="protein sequence ID" value="ENSP00000458435.1"/>
    <property type="RefSeq nucleotide sequence ID" value="NM_001614.5"/>
    <property type="RefSeq protein sequence ID" value="NP_001605.1"/>
</dbReference>
<dbReference type="UCSC" id="uc002kak.3">
    <property type="organism name" value="human"/>
</dbReference>
<dbReference type="AGR" id="HGNC:144"/>
<dbReference type="CTD" id="71"/>
<dbReference type="DisGeNET" id="71"/>
<dbReference type="GeneCards" id="ACTG1"/>
<dbReference type="GeneReviews" id="ACTG1"/>
<dbReference type="HGNC" id="HGNC:144">
    <property type="gene designation" value="ACTG1"/>
</dbReference>
<dbReference type="HPA" id="ENSG00000184009">
    <property type="expression patterns" value="Low tissue specificity"/>
</dbReference>
<dbReference type="MalaCards" id="ACTG1"/>
<dbReference type="MIM" id="102560">
    <property type="type" value="gene"/>
</dbReference>
<dbReference type="MIM" id="604717">
    <property type="type" value="phenotype"/>
</dbReference>
<dbReference type="MIM" id="614583">
    <property type="type" value="phenotype"/>
</dbReference>
<dbReference type="neXtProt" id="NX_P63261"/>
<dbReference type="OpenTargets" id="ENSG00000184009"/>
<dbReference type="Orphanet" id="2995">
    <property type="disease" value="Baraitser-Winter cerebrofrontofacial syndrome"/>
</dbReference>
<dbReference type="Orphanet" id="98942">
    <property type="disease" value="Coloboma of choroid and retina"/>
</dbReference>
<dbReference type="Orphanet" id="98944">
    <property type="disease" value="Coloboma of iris"/>
</dbReference>
<dbReference type="Orphanet" id="90635">
    <property type="disease" value="Rare autosomal dominant non-syndromic sensorineural deafness type DFNA"/>
</dbReference>
<dbReference type="PharmGKB" id="PA24468"/>
<dbReference type="VEuPathDB" id="HostDB:ENSG00000184009"/>
<dbReference type="eggNOG" id="KOG0676">
    <property type="taxonomic scope" value="Eukaryota"/>
</dbReference>
<dbReference type="GeneTree" id="ENSGT00950000182960"/>
<dbReference type="HOGENOM" id="CLU_027965_0_2_1"/>
<dbReference type="InParanoid" id="P63261"/>
<dbReference type="OMA" id="TANASRW"/>
<dbReference type="OrthoDB" id="9816605at2759"/>
<dbReference type="PAN-GO" id="P63261">
    <property type="GO annotations" value="2 GO annotations based on evolutionary models"/>
</dbReference>
<dbReference type="PhylomeDB" id="P63261"/>
<dbReference type="TreeFam" id="TF354237"/>
<dbReference type="PathwayCommons" id="P63261"/>
<dbReference type="Reactome" id="R-HSA-1445148">
    <property type="pathway name" value="Translocation of SLC2A4 (GLUT4) to the plasma membrane"/>
</dbReference>
<dbReference type="Reactome" id="R-HSA-190873">
    <property type="pathway name" value="Gap junction degradation"/>
</dbReference>
<dbReference type="Reactome" id="R-HSA-196025">
    <property type="pathway name" value="Formation of annular gap junctions"/>
</dbReference>
<dbReference type="Reactome" id="R-HSA-2029482">
    <property type="pathway name" value="Regulation of actin dynamics for phagocytic cup formation"/>
</dbReference>
<dbReference type="Reactome" id="R-HSA-3928662">
    <property type="pathway name" value="EPHB-mediated forward signaling"/>
</dbReference>
<dbReference type="Reactome" id="R-HSA-3928665">
    <property type="pathway name" value="EPH-ephrin mediated repulsion of cells"/>
</dbReference>
<dbReference type="Reactome" id="R-HSA-418990">
    <property type="pathway name" value="Adherens junctions interactions"/>
</dbReference>
<dbReference type="Reactome" id="R-HSA-437239">
    <property type="pathway name" value="Recycling pathway of L1"/>
</dbReference>
<dbReference type="Reactome" id="R-HSA-4420097">
    <property type="pathway name" value="VEGFA-VEGFR2 Pathway"/>
</dbReference>
<dbReference type="Reactome" id="R-HSA-445095">
    <property type="pathway name" value="Interaction between L1 and Ankyrins"/>
</dbReference>
<dbReference type="Reactome" id="R-HSA-446353">
    <property type="pathway name" value="Cell-extracellular matrix interactions"/>
</dbReference>
<dbReference type="Reactome" id="R-HSA-5626467">
    <property type="pathway name" value="RHO GTPases activate IQGAPs"/>
</dbReference>
<dbReference type="Reactome" id="R-HSA-5663213">
    <property type="pathway name" value="RHO GTPases Activate WASPs and WAVEs"/>
</dbReference>
<dbReference type="Reactome" id="R-HSA-5663220">
    <property type="pathway name" value="RHO GTPases Activate Formins"/>
</dbReference>
<dbReference type="Reactome" id="R-HSA-5674135">
    <property type="pathway name" value="MAP2K and MAPK activation"/>
</dbReference>
<dbReference type="Reactome" id="R-HSA-6802946">
    <property type="pathway name" value="Signaling by moderate kinase activity BRAF mutants"/>
</dbReference>
<dbReference type="Reactome" id="R-HSA-6802948">
    <property type="pathway name" value="Signaling by high-kinase activity BRAF mutants"/>
</dbReference>
<dbReference type="Reactome" id="R-HSA-6802952">
    <property type="pathway name" value="Signaling by BRAF and RAF1 fusions"/>
</dbReference>
<dbReference type="Reactome" id="R-HSA-6802955">
    <property type="pathway name" value="Paradoxical activation of RAF signaling by kinase inactive BRAF"/>
</dbReference>
<dbReference type="Reactome" id="R-HSA-8856828">
    <property type="pathway name" value="Clathrin-mediated endocytosis"/>
</dbReference>
<dbReference type="Reactome" id="R-HSA-9013418">
    <property type="pathway name" value="RHOBTB2 GTPase cycle"/>
</dbReference>
<dbReference type="Reactome" id="R-HSA-9649948">
    <property type="pathway name" value="Signaling downstream of RAS mutants"/>
</dbReference>
<dbReference type="Reactome" id="R-HSA-9656223">
    <property type="pathway name" value="Signaling by RAF1 mutants"/>
</dbReference>
<dbReference type="Reactome" id="R-HSA-9662360">
    <property type="pathway name" value="Sensory processing of sound by inner hair cells of the cochlea"/>
</dbReference>
<dbReference type="Reactome" id="R-HSA-9662361">
    <property type="pathway name" value="Sensory processing of sound by outer hair cells of the cochlea"/>
</dbReference>
<dbReference type="Reactome" id="R-HSA-9664422">
    <property type="pathway name" value="FCGR3A-mediated phagocytosis"/>
</dbReference>
<dbReference type="Reactome" id="R-HSA-9913351">
    <property type="pathway name" value="Formation of the dystrophin-glycoprotein complex (DGC)"/>
</dbReference>
<dbReference type="SignaLink" id="P63261"/>
<dbReference type="SIGNOR" id="P63261"/>
<dbReference type="BioGRID-ORCS" id="71">
    <property type="hits" value="346 hits in 1154 CRISPR screens"/>
</dbReference>
<dbReference type="CD-CODE" id="91857CE7">
    <property type="entry name" value="Nucleolus"/>
</dbReference>
<dbReference type="ChiTaRS" id="ACTG1">
    <property type="organism name" value="human"/>
</dbReference>
<dbReference type="GeneWiki" id="ACTG1"/>
<dbReference type="GenomeRNAi" id="71"/>
<dbReference type="Pharos" id="P63261">
    <property type="development level" value="Tbio"/>
</dbReference>
<dbReference type="PRO" id="PR:P63261"/>
<dbReference type="Proteomes" id="UP000005640">
    <property type="component" value="Chromosome 17"/>
</dbReference>
<dbReference type="RNAct" id="P63261">
    <property type="molecule type" value="protein"/>
</dbReference>
<dbReference type="Bgee" id="ENSG00000184009">
    <property type="expression patterns" value="Expressed in ileal mucosa and 207 other cell types or tissues"/>
</dbReference>
<dbReference type="ExpressionAtlas" id="P63261">
    <property type="expression patterns" value="baseline and differential"/>
</dbReference>
<dbReference type="GO" id="GO:0015629">
    <property type="term" value="C:actin cytoskeleton"/>
    <property type="evidence" value="ECO:0000318"/>
    <property type="project" value="GO_Central"/>
</dbReference>
<dbReference type="GO" id="GO:0005884">
    <property type="term" value="C:actin filament"/>
    <property type="evidence" value="ECO:0000314"/>
    <property type="project" value="UniProtKB"/>
</dbReference>
<dbReference type="GO" id="GO:0043296">
    <property type="term" value="C:apical junction complex"/>
    <property type="evidence" value="ECO:0000314"/>
    <property type="project" value="ARUK-UCL"/>
</dbReference>
<dbReference type="GO" id="GO:0030424">
    <property type="term" value="C:axon"/>
    <property type="evidence" value="ECO:0000318"/>
    <property type="project" value="GO_Central"/>
</dbReference>
<dbReference type="GO" id="GO:0120220">
    <property type="term" value="C:basal body patch"/>
    <property type="evidence" value="ECO:0007669"/>
    <property type="project" value="Ensembl"/>
</dbReference>
<dbReference type="GO" id="GO:0072562">
    <property type="term" value="C:blood microparticle"/>
    <property type="evidence" value="ECO:0007005"/>
    <property type="project" value="UniProtKB"/>
</dbReference>
<dbReference type="GO" id="GO:0044305">
    <property type="term" value="C:calyx of Held"/>
    <property type="evidence" value="ECO:0007669"/>
    <property type="project" value="Ensembl"/>
</dbReference>
<dbReference type="GO" id="GO:0005911">
    <property type="term" value="C:cell-cell junction"/>
    <property type="evidence" value="ECO:0000314"/>
    <property type="project" value="ARUK-UCL"/>
</dbReference>
<dbReference type="GO" id="GO:0005737">
    <property type="term" value="C:cytoplasm"/>
    <property type="evidence" value="ECO:0000318"/>
    <property type="project" value="GO_Central"/>
</dbReference>
<dbReference type="GO" id="GO:0005856">
    <property type="term" value="C:cytoskeleton"/>
    <property type="evidence" value="ECO:0000250"/>
    <property type="project" value="AgBase"/>
</dbReference>
<dbReference type="GO" id="GO:0005829">
    <property type="term" value="C:cytosol"/>
    <property type="evidence" value="ECO:0000304"/>
    <property type="project" value="Reactome"/>
</dbReference>
<dbReference type="GO" id="GO:0097433">
    <property type="term" value="C:dense body"/>
    <property type="evidence" value="ECO:0000250"/>
    <property type="project" value="AgBase"/>
</dbReference>
<dbReference type="GO" id="GO:0070062">
    <property type="term" value="C:extracellular exosome"/>
    <property type="evidence" value="ECO:0000314"/>
    <property type="project" value="UniProtKB"/>
</dbReference>
<dbReference type="GO" id="GO:0005615">
    <property type="term" value="C:extracellular space"/>
    <property type="evidence" value="ECO:0007005"/>
    <property type="project" value="UniProtKB"/>
</dbReference>
<dbReference type="GO" id="GO:0031941">
    <property type="term" value="C:filamentous actin"/>
    <property type="evidence" value="ECO:0007669"/>
    <property type="project" value="Ensembl"/>
</dbReference>
<dbReference type="GO" id="GO:0005925">
    <property type="term" value="C:focal adhesion"/>
    <property type="evidence" value="ECO:0000250"/>
    <property type="project" value="AgBase"/>
</dbReference>
<dbReference type="GO" id="GO:0016020">
    <property type="term" value="C:membrane"/>
    <property type="evidence" value="ECO:0007005"/>
    <property type="project" value="UniProtKB"/>
</dbReference>
<dbReference type="GO" id="GO:0030016">
    <property type="term" value="C:myofibril"/>
    <property type="evidence" value="ECO:0007669"/>
    <property type="project" value="Ensembl"/>
</dbReference>
<dbReference type="GO" id="GO:0035267">
    <property type="term" value="C:NuA4 histone acetyltransferase complex"/>
    <property type="evidence" value="ECO:0000318"/>
    <property type="project" value="GO_Central"/>
</dbReference>
<dbReference type="GO" id="GO:0005634">
    <property type="term" value="C:nucleus"/>
    <property type="evidence" value="ECO:0007005"/>
    <property type="project" value="UniProtKB"/>
</dbReference>
<dbReference type="GO" id="GO:0045335">
    <property type="term" value="C:phagocytic vesicle"/>
    <property type="evidence" value="ECO:0007669"/>
    <property type="project" value="Ensembl"/>
</dbReference>
<dbReference type="GO" id="GO:0005886">
    <property type="term" value="C:plasma membrane"/>
    <property type="evidence" value="ECO:0000250"/>
    <property type="project" value="AgBase"/>
</dbReference>
<dbReference type="GO" id="GO:0098685">
    <property type="term" value="C:Schaffer collateral - CA1 synapse"/>
    <property type="evidence" value="ECO:0007669"/>
    <property type="project" value="Ensembl"/>
</dbReference>
<dbReference type="GO" id="GO:0045202">
    <property type="term" value="C:synapse"/>
    <property type="evidence" value="ECO:0000318"/>
    <property type="project" value="GO_Central"/>
</dbReference>
<dbReference type="GO" id="GO:0005524">
    <property type="term" value="F:ATP binding"/>
    <property type="evidence" value="ECO:0007669"/>
    <property type="project" value="UniProtKB-KW"/>
</dbReference>
<dbReference type="GO" id="GO:0016787">
    <property type="term" value="F:hydrolase activity"/>
    <property type="evidence" value="ECO:0007669"/>
    <property type="project" value="UniProtKB-KW"/>
</dbReference>
<dbReference type="GO" id="GO:0042802">
    <property type="term" value="F:identical protein binding"/>
    <property type="evidence" value="ECO:0000353"/>
    <property type="project" value="IntAct"/>
</dbReference>
<dbReference type="GO" id="GO:0005522">
    <property type="term" value="F:profilin binding"/>
    <property type="evidence" value="ECO:0000314"/>
    <property type="project" value="UniProtKB"/>
</dbReference>
<dbReference type="GO" id="GO:0019901">
    <property type="term" value="F:protein kinase binding"/>
    <property type="evidence" value="ECO:0000318"/>
    <property type="project" value="GO_Central"/>
</dbReference>
<dbReference type="GO" id="GO:0005200">
    <property type="term" value="F:structural constituent of cytoskeleton"/>
    <property type="evidence" value="ECO:0000305"/>
    <property type="project" value="UniProtKB"/>
</dbReference>
<dbReference type="GO" id="GO:0098973">
    <property type="term" value="F:structural constituent of postsynaptic actin cytoskeleton"/>
    <property type="evidence" value="ECO:0000318"/>
    <property type="project" value="GO_Central"/>
</dbReference>
<dbReference type="GO" id="GO:0031625">
    <property type="term" value="F:ubiquitin protein ligase binding"/>
    <property type="evidence" value="ECO:0000353"/>
    <property type="project" value="ParkinsonsUK-UCL"/>
</dbReference>
<dbReference type="GO" id="GO:0001525">
    <property type="term" value="P:angiogenesis"/>
    <property type="evidence" value="ECO:0000315"/>
    <property type="project" value="ARUK-UCL"/>
</dbReference>
<dbReference type="GO" id="GO:0007409">
    <property type="term" value="P:axonogenesis"/>
    <property type="evidence" value="ECO:0000318"/>
    <property type="project" value="GO_Central"/>
</dbReference>
<dbReference type="GO" id="GO:0048870">
    <property type="term" value="P:cell motility"/>
    <property type="evidence" value="ECO:0000318"/>
    <property type="project" value="GO_Central"/>
</dbReference>
<dbReference type="GO" id="GO:0071346">
    <property type="term" value="P:cellular response to type II interferon"/>
    <property type="evidence" value="ECO:0007669"/>
    <property type="project" value="Ensembl"/>
</dbReference>
<dbReference type="GO" id="GO:0035633">
    <property type="term" value="P:maintenance of blood-brain barrier"/>
    <property type="evidence" value="ECO:0000303"/>
    <property type="project" value="ARUK-UCL"/>
</dbReference>
<dbReference type="GO" id="GO:0001738">
    <property type="term" value="P:morphogenesis of a polarized epithelium"/>
    <property type="evidence" value="ECO:0000315"/>
    <property type="project" value="ARUK-UCL"/>
</dbReference>
<dbReference type="GO" id="GO:0070527">
    <property type="term" value="P:platelet aggregation"/>
    <property type="evidence" value="ECO:0007001"/>
    <property type="project" value="UniProtKB"/>
</dbReference>
<dbReference type="GO" id="GO:0030335">
    <property type="term" value="P:positive regulation of cell migration"/>
    <property type="evidence" value="ECO:0000315"/>
    <property type="project" value="ARUK-UCL"/>
</dbReference>
<dbReference type="GO" id="GO:0010628">
    <property type="term" value="P:positive regulation of gene expression"/>
    <property type="evidence" value="ECO:0000315"/>
    <property type="project" value="ARUK-UCL"/>
</dbReference>
<dbReference type="GO" id="GO:0090303">
    <property type="term" value="P:positive regulation of wound healing"/>
    <property type="evidence" value="ECO:0000315"/>
    <property type="project" value="ARUK-UCL"/>
</dbReference>
<dbReference type="GO" id="GO:1902396">
    <property type="term" value="P:protein localization to bicellular tight junction"/>
    <property type="evidence" value="ECO:0000315"/>
    <property type="project" value="ARUK-UCL"/>
</dbReference>
<dbReference type="GO" id="GO:0051893">
    <property type="term" value="P:regulation of focal adhesion assembly"/>
    <property type="evidence" value="ECO:0000315"/>
    <property type="project" value="ARUK-UCL"/>
</dbReference>
<dbReference type="GO" id="GO:0051492">
    <property type="term" value="P:regulation of stress fiber assembly"/>
    <property type="evidence" value="ECO:0000315"/>
    <property type="project" value="ARUK-UCL"/>
</dbReference>
<dbReference type="GO" id="GO:1900242">
    <property type="term" value="P:regulation of synaptic vesicle endocytosis"/>
    <property type="evidence" value="ECO:0007669"/>
    <property type="project" value="Ensembl"/>
</dbReference>
<dbReference type="GO" id="GO:0150111">
    <property type="term" value="P:regulation of transepithelial transport"/>
    <property type="evidence" value="ECO:0000315"/>
    <property type="project" value="ARUK-UCL"/>
</dbReference>
<dbReference type="GO" id="GO:0045214">
    <property type="term" value="P:sarcomere organization"/>
    <property type="evidence" value="ECO:0007669"/>
    <property type="project" value="Ensembl"/>
</dbReference>
<dbReference type="GO" id="GO:0120192">
    <property type="term" value="P:tight junction assembly"/>
    <property type="evidence" value="ECO:0000315"/>
    <property type="project" value="ARUK-UCL"/>
</dbReference>
<dbReference type="CDD" id="cd10224">
    <property type="entry name" value="ASKHA_NBD_actin"/>
    <property type="match status" value="1"/>
</dbReference>
<dbReference type="FunFam" id="3.30.420.40:FF:000131">
    <property type="entry name" value="Actin, alpha skeletal muscle"/>
    <property type="match status" value="1"/>
</dbReference>
<dbReference type="FunFam" id="3.30.420.40:FF:000291">
    <property type="entry name" value="Actin, alpha skeletal muscle"/>
    <property type="match status" value="1"/>
</dbReference>
<dbReference type="FunFam" id="3.90.640.10:FF:000047">
    <property type="entry name" value="Actin, alpha skeletal muscle"/>
    <property type="match status" value="1"/>
</dbReference>
<dbReference type="FunFam" id="3.30.420.40:FF:000058">
    <property type="entry name" value="Putative actin-related protein 5"/>
    <property type="match status" value="1"/>
</dbReference>
<dbReference type="Gene3D" id="3.30.420.40">
    <property type="match status" value="2"/>
</dbReference>
<dbReference type="Gene3D" id="3.90.640.10">
    <property type="entry name" value="Actin, Chain A, domain 4"/>
    <property type="match status" value="1"/>
</dbReference>
<dbReference type="InterPro" id="IPR004000">
    <property type="entry name" value="Actin"/>
</dbReference>
<dbReference type="InterPro" id="IPR020902">
    <property type="entry name" value="Actin/actin-like_CS"/>
</dbReference>
<dbReference type="InterPro" id="IPR004001">
    <property type="entry name" value="Actin_CS"/>
</dbReference>
<dbReference type="InterPro" id="IPR043129">
    <property type="entry name" value="ATPase_NBD"/>
</dbReference>
<dbReference type="PANTHER" id="PTHR11937">
    <property type="entry name" value="ACTIN"/>
    <property type="match status" value="1"/>
</dbReference>
<dbReference type="Pfam" id="PF00022">
    <property type="entry name" value="Actin"/>
    <property type="match status" value="1"/>
</dbReference>
<dbReference type="PRINTS" id="PR00190">
    <property type="entry name" value="ACTIN"/>
</dbReference>
<dbReference type="SMART" id="SM00268">
    <property type="entry name" value="ACTIN"/>
    <property type="match status" value="1"/>
</dbReference>
<dbReference type="SUPFAM" id="SSF53067">
    <property type="entry name" value="Actin-like ATPase domain"/>
    <property type="match status" value="2"/>
</dbReference>
<dbReference type="PROSITE" id="PS00406">
    <property type="entry name" value="ACTINS_1"/>
    <property type="match status" value="1"/>
</dbReference>
<dbReference type="PROSITE" id="PS00432">
    <property type="entry name" value="ACTINS_2"/>
    <property type="match status" value="1"/>
</dbReference>
<dbReference type="PROSITE" id="PS01132">
    <property type="entry name" value="ACTINS_ACT_LIKE"/>
    <property type="match status" value="1"/>
</dbReference>
<feature type="chain" id="PRO_0000367100" description="Actin, cytoplasmic 2">
    <location>
        <begin position="1"/>
        <end position="375"/>
    </location>
</feature>
<feature type="initiator methionine" description="Removed; alternate" evidence="3 18 19 20 25 26 27 28">
    <location>
        <position position="1"/>
    </location>
</feature>
<feature type="chain" id="PRO_0000000831" description="Actin, cytoplasmic 2, N-terminally processed" evidence="24">
    <location>
        <begin position="2"/>
        <end position="375"/>
    </location>
</feature>
<feature type="modified residue" description="N-acetylmethionine" evidence="18 26 27">
    <location>
        <position position="1"/>
    </location>
</feature>
<feature type="modified residue" description="N-acetylglutamate; in Actin, cytoplasmic 2, N-terminally processed; partial" evidence="14 15 19 20 25 26 27 28">
    <location>
        <position position="2"/>
    </location>
</feature>
<feature type="modified residue" description="Methionine (R)-sulfoxide" evidence="1">
    <location>
        <position position="44"/>
    </location>
</feature>
<feature type="modified residue" description="Methionine (R)-sulfoxide" evidence="1">
    <location>
        <position position="47"/>
    </location>
</feature>
<feature type="modified residue" description="Tele-methylhistidine" evidence="16 20">
    <location>
        <position position="73"/>
    </location>
</feature>
<feature type="modified residue" description="N6-methyllysine" evidence="11">
    <location>
        <position position="84"/>
    </location>
</feature>
<feature type="cross-link" description="(Microbial infection) Isoglutamyl lysine isopeptide (Lys-Glu) (interchain with E-270); by Vibrio toxins RtxA and VgrG1" evidence="22">
    <location>
        <position position="50"/>
    </location>
</feature>
<feature type="cross-link" description="(Microbial infection) Isoglutamyl lysine isopeptide (Glu-Lys) (interchain with K-50); by Vibrio toxins RtxA and VgrG1" evidence="22">
    <location>
        <position position="270"/>
    </location>
</feature>
<feature type="sequence variant" id="VAR_079849" description="Found in a patient with isolated coloboma; decreased incorporation into F-actin; decreased interaction with cofilin; loss of interaction with TWF1, CAPZB and profilin." evidence="13">
    <original>P</original>
    <variation>L</variation>
    <location>
        <position position="70"/>
    </location>
</feature>
<feature type="sequence variant" id="VAR_032434" description="In DFNA20; dbSNP:rs28999111." evidence="4">
    <original>T</original>
    <variation>I</variation>
    <location>
        <position position="89"/>
    </location>
</feature>
<feature type="sequence variant" id="VAR_032435" description="In DFNA20; dbSNP:rs104894544." evidence="4">
    <original>K</original>
    <variation>M</variation>
    <location>
        <position position="118"/>
    </location>
</feature>
<feature type="sequence variant" id="VAR_067824" description="In DFNA20; dbSNP:rs267606630." evidence="8">
    <original>K</original>
    <variation>N</variation>
    <location>
        <position position="118"/>
    </location>
</feature>
<feature type="sequence variant" id="VAR_067814" description="In BRWS2; dbSNP:rs281875325." evidence="9">
    <original>T</original>
    <variation>I</variation>
    <location>
        <position position="120"/>
    </location>
</feature>
<feature type="sequence variant" id="VAR_067825" description="In DFNA20; dbSNP:rs281875330." evidence="7">
    <original>I</original>
    <variation>V</variation>
    <location>
        <position position="122"/>
    </location>
</feature>
<feature type="sequence variant" id="VAR_067815" description="In BRWS2; dbSNP:rs11549190." evidence="9">
    <original>A</original>
    <variation>V</variation>
    <location>
        <position position="135"/>
    </location>
</feature>
<feature type="sequence variant" id="VAR_067816" description="In BRWS2; dbSNP:rs281875326." evidence="9">
    <original>S</original>
    <variation>F</variation>
    <location>
        <position position="155"/>
    </location>
</feature>
<feature type="sequence variant" id="VAR_048186" description="In dbSNP:rs11549206.">
    <original>T</original>
    <variation>I</variation>
    <location>
        <position position="160"/>
    </location>
</feature>
<feature type="sequence variant" id="VAR_079878" description="In DFNA20." evidence="10">
    <original>D</original>
    <variation>H</variation>
    <location>
        <position position="187"/>
    </location>
</feature>
<feature type="sequence variant" id="VAR_067817" description="In BRWS2; dbSNP:rs281875327." evidence="9">
    <original>T</original>
    <variation>K</variation>
    <location>
        <position position="203"/>
    </location>
</feature>
<feature type="sequence variant" id="VAR_067826" description="In DFNA20; dbSNP:rs267606631." evidence="8">
    <original>E</original>
    <variation>K</variation>
    <location>
        <position position="241"/>
    </location>
</feature>
<feature type="sequence variant" id="VAR_067818" description="In BRWS2; dbSNP:rs281875328." evidence="9">
    <original>R</original>
    <variation>W</variation>
    <location>
        <position position="254"/>
    </location>
</feature>
<feature type="sequence variant" id="VAR_067819" description="In BRWS2; dbSNP:rs281875329." evidence="9">
    <original>R</original>
    <variation>W</variation>
    <location>
        <position position="256"/>
    </location>
</feature>
<feature type="sequence variant" id="VAR_032436" description="In DFNA20; dbSNP:rs104894546." evidence="4">
    <original>P</original>
    <variation>L</variation>
    <location>
        <position position="264"/>
    </location>
</feature>
<feature type="sequence variant" id="VAR_032437" description="In DFNA20; dbSNP:rs28999112." evidence="5">
    <original>T</original>
    <variation>I</variation>
    <location>
        <position position="278"/>
    </location>
</feature>
<feature type="sequence variant" id="VAR_079879" description="In DFNA20; uncertain significance." evidence="12 17">
    <original>E</original>
    <variation>K</variation>
    <location>
        <position position="316"/>
    </location>
</feature>
<feature type="sequence variant" id="VAR_032438" description="In DFNA20; dbSNP:rs104894545." evidence="4">
    <original>P</original>
    <variation>A</variation>
    <location>
        <position position="332"/>
    </location>
</feature>
<feature type="sequence variant" id="VAR_032439" description="In DFNA20; dbSNP:rs104894547." evidence="6">
    <original>V</original>
    <variation>A</variation>
    <location>
        <position position="370"/>
    </location>
</feature>
<feature type="sequence conflict" description="In Ref. 10; AAA51580." evidence="21" ref="10">
    <original>S</original>
    <variation>F</variation>
    <location>
        <position position="344"/>
    </location>
</feature>
<feature type="strand" evidence="30">
    <location>
        <begin position="8"/>
        <end position="10"/>
    </location>
</feature>
<feature type="strand" evidence="31">
    <location>
        <begin position="14"/>
        <end position="21"/>
    </location>
</feature>
<feature type="strand" evidence="31">
    <location>
        <begin position="28"/>
        <end position="32"/>
    </location>
</feature>
<feature type="strand" evidence="31">
    <location>
        <begin position="35"/>
        <end position="38"/>
    </location>
</feature>
<feature type="strand" evidence="31">
    <location>
        <begin position="45"/>
        <end position="47"/>
    </location>
</feature>
<feature type="strand" evidence="30">
    <location>
        <begin position="53"/>
        <end position="58"/>
    </location>
</feature>
<feature type="helix" evidence="30">
    <location>
        <begin position="59"/>
        <end position="65"/>
    </location>
</feature>
<feature type="strand" evidence="29">
    <location>
        <begin position="68"/>
        <end position="70"/>
    </location>
</feature>
<feature type="strand" evidence="30">
    <location>
        <begin position="75"/>
        <end position="77"/>
    </location>
</feature>
<feature type="turn" evidence="29">
    <location>
        <begin position="81"/>
        <end position="83"/>
    </location>
</feature>
<feature type="turn" evidence="30">
    <location>
        <begin position="89"/>
        <end position="92"/>
    </location>
</feature>
<feature type="strand" evidence="30">
    <location>
        <begin position="103"/>
        <end position="107"/>
    </location>
</feature>
<feature type="helix" evidence="30">
    <location>
        <begin position="113"/>
        <end position="125"/>
    </location>
</feature>
<feature type="strand" evidence="30">
    <location>
        <begin position="130"/>
        <end position="136"/>
    </location>
</feature>
<feature type="helix" evidence="30">
    <location>
        <begin position="137"/>
        <end position="144"/>
    </location>
</feature>
<feature type="strand" evidence="30">
    <location>
        <begin position="148"/>
        <end position="155"/>
    </location>
</feature>
<feature type="strand" evidence="30">
    <location>
        <begin position="160"/>
        <end position="166"/>
    </location>
</feature>
<feature type="helix" evidence="31">
    <location>
        <begin position="172"/>
        <end position="174"/>
    </location>
</feature>
<feature type="strand" evidence="30">
    <location>
        <begin position="176"/>
        <end position="178"/>
    </location>
</feature>
<feature type="helix" evidence="30">
    <location>
        <begin position="182"/>
        <end position="191"/>
    </location>
</feature>
<feature type="helix" evidence="31">
    <location>
        <begin position="194"/>
        <end position="196"/>
    </location>
</feature>
<feature type="helix" evidence="30">
    <location>
        <begin position="203"/>
        <end position="214"/>
    </location>
</feature>
<feature type="helix" evidence="30">
    <location>
        <begin position="223"/>
        <end position="227"/>
    </location>
</feature>
<feature type="strand" evidence="31">
    <location>
        <begin position="238"/>
        <end position="241"/>
    </location>
</feature>
<feature type="strand" evidence="31">
    <location>
        <begin position="247"/>
        <end position="251"/>
    </location>
</feature>
<feature type="helix" evidence="31">
    <location>
        <begin position="253"/>
        <end position="256"/>
    </location>
</feature>
<feature type="helix" evidence="31">
    <location>
        <begin position="258"/>
        <end position="261"/>
    </location>
</feature>
<feature type="helix" evidence="30">
    <location>
        <begin position="264"/>
        <end position="267"/>
    </location>
</feature>
<feature type="helix" evidence="30">
    <location>
        <begin position="274"/>
        <end position="283"/>
    </location>
</feature>
<feature type="turn" evidence="30">
    <location>
        <begin position="287"/>
        <end position="289"/>
    </location>
</feature>
<feature type="helix" evidence="30">
    <location>
        <begin position="290"/>
        <end position="295"/>
    </location>
</feature>
<feature type="strand" evidence="30">
    <location>
        <begin position="297"/>
        <end position="300"/>
    </location>
</feature>
<feature type="helix" evidence="30">
    <location>
        <begin position="302"/>
        <end position="305"/>
    </location>
</feature>
<feature type="turn" evidence="30">
    <location>
        <begin position="306"/>
        <end position="308"/>
    </location>
</feature>
<feature type="helix" evidence="30">
    <location>
        <begin position="311"/>
        <end position="320"/>
    </location>
</feature>
<feature type="strand" evidence="30">
    <location>
        <begin position="323"/>
        <end position="325"/>
    </location>
</feature>
<feature type="helix" evidence="31">
    <location>
        <begin position="335"/>
        <end position="337"/>
    </location>
</feature>
<feature type="helix" evidence="30">
    <location>
        <begin position="338"/>
        <end position="348"/>
    </location>
</feature>
<feature type="helix" evidence="30">
    <location>
        <begin position="351"/>
        <end position="355"/>
    </location>
</feature>
<feature type="helix" evidence="30">
    <location>
        <begin position="359"/>
        <end position="365"/>
    </location>
</feature>
<feature type="helix" evidence="30">
    <location>
        <begin position="367"/>
        <end position="371"/>
    </location>
</feature>
<gene>
    <name type="primary">ACTG1</name>
    <name type="synonym">ACTG</name>
</gene>
<reference key="1">
    <citation type="journal article" date="1986" name="Nucleic Acids Res.">
        <title>Nucleotide sequence of the human gamma cytoskeletal actin mRNA: anomalous evolution of vertebrate non-muscle actin genes.</title>
        <authorList>
            <person name="Erba H.P."/>
            <person name="Gunning P."/>
            <person name="Kedes L."/>
        </authorList>
    </citation>
    <scope>NUCLEOTIDE SEQUENCE [MRNA]</scope>
</reference>
<reference key="2">
    <citation type="journal article" date="1988" name="Mol. Cell. Biol.">
        <title>Structure, chromosome location, and expression of the human gamma-actin gene: differential evolution, location, and expression of the cytoskeletal beta- and gamma-actin genes.</title>
        <authorList>
            <person name="Erba H.P."/>
            <person name="Eddy R."/>
            <person name="Shows T."/>
            <person name="Kedes L."/>
            <person name="Gunning P."/>
        </authorList>
    </citation>
    <scope>NUCLEOTIDE SEQUENCE [GENOMIC DNA]</scope>
</reference>
<reference key="3">
    <citation type="journal article" date="2004" name="Nat. Genet.">
        <title>Complete sequencing and characterization of 21,243 full-length human cDNAs.</title>
        <authorList>
            <person name="Ota T."/>
            <person name="Suzuki Y."/>
            <person name="Nishikawa T."/>
            <person name="Otsuki T."/>
            <person name="Sugiyama T."/>
            <person name="Irie R."/>
            <person name="Wakamatsu A."/>
            <person name="Hayashi K."/>
            <person name="Sato H."/>
            <person name="Nagai K."/>
            <person name="Kimura K."/>
            <person name="Makita H."/>
            <person name="Sekine M."/>
            <person name="Obayashi M."/>
            <person name="Nishi T."/>
            <person name="Shibahara T."/>
            <person name="Tanaka T."/>
            <person name="Ishii S."/>
            <person name="Yamamoto J."/>
            <person name="Saito K."/>
            <person name="Kawai Y."/>
            <person name="Isono Y."/>
            <person name="Nakamura Y."/>
            <person name="Nagahari K."/>
            <person name="Murakami K."/>
            <person name="Yasuda T."/>
            <person name="Iwayanagi T."/>
            <person name="Wagatsuma M."/>
            <person name="Shiratori A."/>
            <person name="Sudo H."/>
            <person name="Hosoiri T."/>
            <person name="Kaku Y."/>
            <person name="Kodaira H."/>
            <person name="Kondo H."/>
            <person name="Sugawara M."/>
            <person name="Takahashi M."/>
            <person name="Kanda K."/>
            <person name="Yokoi T."/>
            <person name="Furuya T."/>
            <person name="Kikkawa E."/>
            <person name="Omura Y."/>
            <person name="Abe K."/>
            <person name="Kamihara K."/>
            <person name="Katsuta N."/>
            <person name="Sato K."/>
            <person name="Tanikawa M."/>
            <person name="Yamazaki M."/>
            <person name="Ninomiya K."/>
            <person name="Ishibashi T."/>
            <person name="Yamashita H."/>
            <person name="Murakawa K."/>
            <person name="Fujimori K."/>
            <person name="Tanai H."/>
            <person name="Kimata M."/>
            <person name="Watanabe M."/>
            <person name="Hiraoka S."/>
            <person name="Chiba Y."/>
            <person name="Ishida S."/>
            <person name="Ono Y."/>
            <person name="Takiguchi S."/>
            <person name="Watanabe S."/>
            <person name="Yosida M."/>
            <person name="Hotuta T."/>
            <person name="Kusano J."/>
            <person name="Kanehori K."/>
            <person name="Takahashi-Fujii A."/>
            <person name="Hara H."/>
            <person name="Tanase T.-O."/>
            <person name="Nomura Y."/>
            <person name="Togiya S."/>
            <person name="Komai F."/>
            <person name="Hara R."/>
            <person name="Takeuchi K."/>
            <person name="Arita M."/>
            <person name="Imose N."/>
            <person name="Musashino K."/>
            <person name="Yuuki H."/>
            <person name="Oshima A."/>
            <person name="Sasaki N."/>
            <person name="Aotsuka S."/>
            <person name="Yoshikawa Y."/>
            <person name="Matsunawa H."/>
            <person name="Ichihara T."/>
            <person name="Shiohata N."/>
            <person name="Sano S."/>
            <person name="Moriya S."/>
            <person name="Momiyama H."/>
            <person name="Satoh N."/>
            <person name="Takami S."/>
            <person name="Terashima Y."/>
            <person name="Suzuki O."/>
            <person name="Nakagawa S."/>
            <person name="Senoh A."/>
            <person name="Mizoguchi H."/>
            <person name="Goto Y."/>
            <person name="Shimizu F."/>
            <person name="Wakebe H."/>
            <person name="Hishigaki H."/>
            <person name="Watanabe T."/>
            <person name="Sugiyama A."/>
            <person name="Takemoto M."/>
            <person name="Kawakami B."/>
            <person name="Yamazaki M."/>
            <person name="Watanabe K."/>
            <person name="Kumagai A."/>
            <person name="Itakura S."/>
            <person name="Fukuzumi Y."/>
            <person name="Fujimori Y."/>
            <person name="Komiyama M."/>
            <person name="Tashiro H."/>
            <person name="Tanigami A."/>
            <person name="Fujiwara T."/>
            <person name="Ono T."/>
            <person name="Yamada K."/>
            <person name="Fujii Y."/>
            <person name="Ozaki K."/>
            <person name="Hirao M."/>
            <person name="Ohmori Y."/>
            <person name="Kawabata A."/>
            <person name="Hikiji T."/>
            <person name="Kobatake N."/>
            <person name="Inagaki H."/>
            <person name="Ikema Y."/>
            <person name="Okamoto S."/>
            <person name="Okitani R."/>
            <person name="Kawakami T."/>
            <person name="Noguchi S."/>
            <person name="Itoh T."/>
            <person name="Shigeta K."/>
            <person name="Senba T."/>
            <person name="Matsumura K."/>
            <person name="Nakajima Y."/>
            <person name="Mizuno T."/>
            <person name="Morinaga M."/>
            <person name="Sasaki M."/>
            <person name="Togashi T."/>
            <person name="Oyama M."/>
            <person name="Hata H."/>
            <person name="Watanabe M."/>
            <person name="Komatsu T."/>
            <person name="Mizushima-Sugano J."/>
            <person name="Satoh T."/>
            <person name="Shirai Y."/>
            <person name="Takahashi Y."/>
            <person name="Nakagawa K."/>
            <person name="Okumura K."/>
            <person name="Nagase T."/>
            <person name="Nomura N."/>
            <person name="Kikuchi H."/>
            <person name="Masuho Y."/>
            <person name="Yamashita R."/>
            <person name="Nakai K."/>
            <person name="Yada T."/>
            <person name="Nakamura Y."/>
            <person name="Ohara O."/>
            <person name="Isogai T."/>
            <person name="Sugano S."/>
        </authorList>
    </citation>
    <scope>NUCLEOTIDE SEQUENCE [LARGE SCALE MRNA]</scope>
</reference>
<reference key="4">
    <citation type="submission" date="2004-10" db="EMBL/GenBank/DDBJ databases">
        <title>Cloning of human full-length CDSs in BD Creator(TM) system donor vector.</title>
        <authorList>
            <person name="Kalnine N."/>
            <person name="Chen X."/>
            <person name="Rolfs A."/>
            <person name="Halleck A."/>
            <person name="Hines L."/>
            <person name="Eisenstein S."/>
            <person name="Koundinya M."/>
            <person name="Raphael J."/>
            <person name="Moreira D."/>
            <person name="Kelley T."/>
            <person name="LaBaer J."/>
            <person name="Lin Y."/>
            <person name="Phelan M."/>
            <person name="Farmer A."/>
        </authorList>
    </citation>
    <scope>NUCLEOTIDE SEQUENCE [LARGE SCALE MRNA]</scope>
</reference>
<reference key="5">
    <citation type="journal article" date="2004" name="Genome Res.">
        <title>The status, quality, and expansion of the NIH full-length cDNA project: the Mammalian Gene Collection (MGC).</title>
        <authorList>
            <consortium name="The MGC Project Team"/>
        </authorList>
    </citation>
    <scope>NUCLEOTIDE SEQUENCE [LARGE SCALE MRNA]</scope>
    <source>
        <tissue>B-cell</tissue>
        <tissue>Eye</tissue>
        <tissue>Lung</tissue>
        <tissue>Ovary</tissue>
        <tissue>Placenta</tissue>
        <tissue>Skin</tissue>
        <tissue>Uterus</tissue>
    </source>
</reference>
<reference key="6">
    <citation type="journal article" date="2003" name="Nat. Biotechnol.">
        <title>Exploring proteomes and analyzing protein processing by mass spectrometric identification of sorted N-terminal peptides.</title>
        <authorList>
            <person name="Gevaert K."/>
            <person name="Goethals M."/>
            <person name="Martens L."/>
            <person name="Van Damme J."/>
            <person name="Staes A."/>
            <person name="Thomas G.R."/>
            <person name="Vandekerckhove J."/>
        </authorList>
    </citation>
    <scope>PROTEIN SEQUENCE OF 2-28</scope>
    <source>
        <tissue>Platelet</tissue>
    </source>
</reference>
<reference key="7">
    <citation type="submission" date="2005-06" db="UniProtKB">
        <authorList>
            <person name="Bienvenut W.V."/>
        </authorList>
    </citation>
    <scope>PROTEIN SEQUENCE OF 2-18; 29-37; 40-50; 85-113; 148-177; 184-191; 197-206; 239-254; 292-312 AND 316-326</scope>
    <scope>CLEAVAGE OF INITIATOR METHIONINE</scope>
    <scope>ACETYLATION AT GLU-2</scope>
    <scope>IDENTIFICATION BY MASS SPECTROMETRY</scope>
    <source>
        <tissue>B-cell lymphoma</tissue>
    </source>
</reference>
<reference key="8">
    <citation type="submission" date="2009-06" db="UniProtKB">
        <authorList>
            <person name="Bienvenut W.V."/>
            <person name="Lilla S."/>
            <person name="von Kriegsheim A."/>
            <person name="Lempens A."/>
            <person name="Kolch W."/>
            <person name="Dozynkiewicz M."/>
            <person name="Norman J.C."/>
        </authorList>
    </citation>
    <scope>PROTEIN SEQUENCE OF 2-116; 119-210; 216-254 AND 291-372</scope>
    <scope>CLEAVAGE OF INITIATOR METHIONINE</scope>
    <scope>ACETYLATION AT GLU-2</scope>
    <scope>METHYLATION AT HIS-73</scope>
    <scope>IDENTIFICATION BY MASS SPECTROMETRY</scope>
    <source>
        <tissue>Ovarian carcinoma</tissue>
    </source>
</reference>
<reference key="9">
    <citation type="submission" date="2007-03" db="UniProtKB">
        <authorList>
            <person name="Lubec G."/>
            <person name="Afjehi-Sadat L."/>
        </authorList>
    </citation>
    <scope>PROTEIN SEQUENCE OF 29-39; 85-113; 239-254 AND 292-312</scope>
    <scope>IDENTIFICATION BY MASS SPECTROMETRY</scope>
    <source>
        <tissue>Brain</tissue>
        <tissue>Cajal-Retzius cell</tissue>
    </source>
</reference>
<reference key="10">
    <citation type="journal article" date="1987" name="Proc. Natl. Acad. Sci. U.S.A.">
        <title>Gamma-actin: unusual mRNA 3'-untranslated sequence conservation and amino acid substitutions that may be cancer related.</title>
        <authorList>
            <person name="Chou C.C."/>
            <person name="Davis R.C."/>
            <person name="Fuller M.L."/>
            <person name="Slovin J.P."/>
            <person name="Wong A."/>
            <person name="Wright J."/>
            <person name="Kania S."/>
            <person name="Shaked R."/>
            <person name="Gatti R.A."/>
            <person name="Salser W.A."/>
        </authorList>
    </citation>
    <scope>NUCLEOTIDE SEQUENCE [MRNA] OF 144-375</scope>
    <scope>VARIANT DFNA20 LYS-316</scope>
</reference>
<reference key="11">
    <citation type="journal article" date="2003" name="Nature">
        <title>Proteomic characterization of the human centrosome by protein correlation profiling.</title>
        <authorList>
            <person name="Andersen J.S."/>
            <person name="Wilkinson C.J."/>
            <person name="Mayor T."/>
            <person name="Mortensen P."/>
            <person name="Nigg E.A."/>
            <person name="Mann M."/>
        </authorList>
    </citation>
    <scope>IDENTIFICATION BY MASS SPECTROMETRY</scope>
    <source>
        <tissue>Lymphoblast</tissue>
    </source>
</reference>
<reference key="12">
    <citation type="journal article" date="2008" name="Proc. Natl. Acad. Sci. U.S.A.">
        <title>Connecting actin monomers by iso-peptide bond is a toxicity mechanism of the Vibrio cholerae MARTX toxin.</title>
        <authorList>
            <person name="Kudryashov D.S."/>
            <person name="Durer Z.A."/>
            <person name="Ytterberg A.J."/>
            <person name="Sawaya M.R."/>
            <person name="Pashkov I."/>
            <person name="Prochazkova K."/>
            <person name="Yeates T.O."/>
            <person name="Loo R.R."/>
            <person name="Loo J.A."/>
            <person name="Satchell K.J."/>
            <person name="Reisler E."/>
        </authorList>
    </citation>
    <scope>CROSS-LINK BY V.CHOLERAE TOXIN RTXA (MICROBIAL INFECTION)</scope>
</reference>
<reference key="13">
    <citation type="journal article" date="2009" name="Anal. Chem.">
        <title>Lys-N and trypsin cover complementary parts of the phosphoproteome in a refined SCX-based approach.</title>
        <authorList>
            <person name="Gauci S."/>
            <person name="Helbig A.O."/>
            <person name="Slijper M."/>
            <person name="Krijgsveld J."/>
            <person name="Heck A.J."/>
            <person name="Mohammed S."/>
        </authorList>
    </citation>
    <scope>ACETYLATION [LARGE SCALE ANALYSIS] AT GLU-2</scope>
    <scope>CLEAVAGE OF INITIATOR METHIONINE [LARGE SCALE ANALYSIS]</scope>
    <scope>IDENTIFICATION BY MASS SPECTROMETRY [LARGE SCALE ANALYSIS]</scope>
</reference>
<reference key="14">
    <citation type="journal article" date="2012" name="Mol. Cell. Proteomics">
        <title>Comparative large-scale characterisation of plant vs. mammal proteins reveals similar and idiosyncratic N-alpha acetylation features.</title>
        <authorList>
            <person name="Bienvenut W.V."/>
            <person name="Sumpton D."/>
            <person name="Martinez A."/>
            <person name="Lilla S."/>
            <person name="Espagne C."/>
            <person name="Meinnel T."/>
            <person name="Giglione C."/>
        </authorList>
    </citation>
    <scope>ACETYLATION [LARGE SCALE ANALYSIS] AT MET-1 AND GLU-2</scope>
    <scope>CLEAVAGE OF INITIATOR METHIONINE [LARGE SCALE ANALYSIS]</scope>
    <scope>IDENTIFICATION BY MASS SPECTROMETRY [LARGE SCALE ANALYSIS]</scope>
</reference>
<reference key="15">
    <citation type="journal article" date="2012" name="Proc. Natl. Acad. Sci. U.S.A.">
        <title>N-terminal acetylome analyses and functional insights of the N-terminal acetyltransferase NatB.</title>
        <authorList>
            <person name="Van Damme P."/>
            <person name="Lasa M."/>
            <person name="Polevoda B."/>
            <person name="Gazquez C."/>
            <person name="Elosegui-Artola A."/>
            <person name="Kim D.S."/>
            <person name="De Juan-Pardo E."/>
            <person name="Demeyer K."/>
            <person name="Hole K."/>
            <person name="Larrea E."/>
            <person name="Timmerman E."/>
            <person name="Prieto J."/>
            <person name="Arnesen T."/>
            <person name="Sherman F."/>
            <person name="Gevaert K."/>
            <person name="Aldabe R."/>
        </authorList>
    </citation>
    <scope>ACETYLATION [LARGE SCALE ANALYSIS] AT MET-1 AND GLU-2</scope>
    <scope>CLEAVAGE OF INITIATOR METHIONINE [LARGE SCALE ANALYSIS]</scope>
    <scope>IDENTIFICATION BY MASS SPECTROMETRY [LARGE SCALE ANALYSIS]</scope>
</reference>
<reference key="16">
    <citation type="journal article" date="2013" name="Nat. Commun.">
        <title>ALKBH4-dependent demethylation of actin regulates actomyosin dynamics.</title>
        <authorList>
            <person name="Li M.M."/>
            <person name="Nilsen A."/>
            <person name="Shi Y."/>
            <person name="Fusser M."/>
            <person name="Ding Y.H."/>
            <person name="Fu Y."/>
            <person name="Liu B."/>
            <person name="Niu Y."/>
            <person name="Wu Y.S."/>
            <person name="Huang C.M."/>
            <person name="Olofsson M."/>
            <person name="Jin K.X."/>
            <person name="Lv Y."/>
            <person name="Xu X.Z."/>
            <person name="He C."/>
            <person name="Dong M.Q."/>
            <person name="Rendtlew Danielsen J.M."/>
            <person name="Klungland A."/>
            <person name="Yang Y.G."/>
        </authorList>
    </citation>
    <scope>METHYLATION AT LYS-84</scope>
    <scope>DEMETHYLATION BY ALKBH4</scope>
</reference>
<reference key="17">
    <citation type="journal article" date="2015" name="Proteomics">
        <title>N-terminome analysis of the human mitochondrial proteome.</title>
        <authorList>
            <person name="Vaca Jacome A.S."/>
            <person name="Rabilloud T."/>
            <person name="Schaeffer-Reiss C."/>
            <person name="Rompais M."/>
            <person name="Ayoub D."/>
            <person name="Lane L."/>
            <person name="Bairoch A."/>
            <person name="Van Dorsselaer A."/>
            <person name="Carapito C."/>
        </authorList>
    </citation>
    <scope>ACETYLATION [LARGE SCALE ANALYSIS] AT GLU-2</scope>
    <scope>CLEAVAGE OF INITIATOR METHIONINE [LARGE SCALE ANALYSIS]</scope>
    <scope>IDENTIFICATION BY MASS SPECTROMETRY [LARGE SCALE ANALYSIS]</scope>
</reference>
<reference key="18">
    <citation type="journal article" date="2015" name="Science">
        <title>ACD toxin-produced actin oligomers poison formin-controlled actin polymerization.</title>
        <authorList>
            <person name="Heisler D.B."/>
            <person name="Kudryashova E."/>
            <person name="Grinevich D.O."/>
            <person name="Suarez C."/>
            <person name="Winkelman J.D."/>
            <person name="Birukov K.G."/>
            <person name="Kotha S.R."/>
            <person name="Parinandi N.L."/>
            <person name="Vavylonis D."/>
            <person name="Kovar D.R."/>
            <person name="Kudryashov D.S."/>
        </authorList>
    </citation>
    <scope>CROSS-LINK BY V.CHOLERAE TOXIN RTXA (MICROBIAL INFECTION)</scope>
</reference>
<reference key="19">
    <citation type="journal article" date="2018" name="FEBS J.">
        <title>NAT6 acetylates the N-terminus of different forms of actin.</title>
        <authorList>
            <person name="Wiame E."/>
            <person name="Tahay G."/>
            <person name="Tyteca D."/>
            <person name="Vertommen D."/>
            <person name="Stroobant V."/>
            <person name="Bommer G.T."/>
            <person name="Van Schaftingen E."/>
        </authorList>
    </citation>
    <scope>ACETYLATION AT GLU-2</scope>
</reference>
<reference key="20">
    <citation type="journal article" date="2018" name="Proc. Natl. Acad. Sci. U.S.A.">
        <title>NAA80 is actin's N-terminal acetyltransferase and regulates cytoskeleton assembly and cell motility.</title>
        <authorList>
            <person name="Drazic A."/>
            <person name="Aksnes H."/>
            <person name="Marie M."/>
            <person name="Boczkowska M."/>
            <person name="Varland S."/>
            <person name="Timmerman E."/>
            <person name="Foyn H."/>
            <person name="Glomnes N."/>
            <person name="Rebowski G."/>
            <person name="Impens F."/>
            <person name="Gevaert K."/>
            <person name="Dominguez R."/>
            <person name="Arnesen T."/>
        </authorList>
    </citation>
    <scope>FUNCTION</scope>
    <scope>ACETYLATION AT GLU-2</scope>
</reference>
<reference key="21">
    <citation type="journal article" date="2019" name="Nature">
        <title>SETD3 is an actin histidine methyltransferase that prevents primary dystocia.</title>
        <authorList>
            <person name="Wilkinson A.W."/>
            <person name="Diep J."/>
            <person name="Dai S."/>
            <person name="Liu S."/>
            <person name="Ooi Y.S."/>
            <person name="Song D."/>
            <person name="Li T.M."/>
            <person name="Horton J.R."/>
            <person name="Zhang X."/>
            <person name="Liu C."/>
            <person name="Trivedi D.V."/>
            <person name="Ruppel K.M."/>
            <person name="Vilches-Moure J.G."/>
            <person name="Casey K.M."/>
            <person name="Mak J."/>
            <person name="Cowan T."/>
            <person name="Elias J.E."/>
            <person name="Nagamine C.M."/>
            <person name="Spudich J.A."/>
            <person name="Cheng X."/>
            <person name="Carette J.E."/>
            <person name="Gozani O."/>
        </authorList>
    </citation>
    <scope>METHYLATION AT HIS-73</scope>
</reference>
<reference key="22">
    <citation type="journal article" date="2022" name="Science">
        <title>Actin maturation requires the ACTMAP/C19orf54 protease.</title>
        <authorList>
            <person name="Haahr P."/>
            <person name="Galli R.A."/>
            <person name="van den Hengel L.G."/>
            <person name="Bleijerveld O.B."/>
            <person name="Kazokaite-Adomaitiene J."/>
            <person name="Song J.Y."/>
            <person name="Kroese L.J."/>
            <person name="Krimpenfort P."/>
            <person name="Baltissen M.P."/>
            <person name="Vermeulen M."/>
            <person name="Ottenheijm C.A.C."/>
            <person name="Brummelkamp T.R."/>
        </authorList>
    </citation>
    <scope>PROTEOLYTIC CLEAVAGE BY ACTMAP</scope>
    <scope>CLEAVAGE OF INITIATOR METHIONINE</scope>
    <scope>ACETYLATION AT MET-1</scope>
</reference>
<reference key="23">
    <citation type="journal article" date="2003" name="Am. J. Hum. Genet.">
        <title>Mutations in the gamma-actin gene (ACTG1) are associated with dominant progressive deafness (DFNA20/26).</title>
        <authorList>
            <person name="Zhu M."/>
            <person name="Yang T."/>
            <person name="Wei S."/>
            <person name="DeWan A.T."/>
            <person name="Morell R.J."/>
            <person name="Elfenbein J.L."/>
            <person name="Fisher R.A."/>
            <person name="Leal S.M."/>
            <person name="Smith R.J.H."/>
            <person name="Friderici K.H."/>
        </authorList>
    </citation>
    <scope>VARIANTS DFNA20 ILE-89; MET-118; LEU-264 AND ALA-332</scope>
</reference>
<reference key="24">
    <citation type="journal article" date="2003" name="J. Med. Genet.">
        <title>A mutation in the gamma actin 1 (ACTG1) gene causes autosomal dominant hearing loss (DFNA20/26).</title>
        <authorList>
            <person name="van Wijk E."/>
            <person name="Krieger E."/>
            <person name="Kemperman M.H."/>
            <person name="De Leenheer E.M.R."/>
            <person name="Huygen P.L.M."/>
            <person name="Cremers C.W.R.J."/>
            <person name="Cremers F.P.M."/>
            <person name="Kremer H."/>
        </authorList>
    </citation>
    <scope>VARIANT DFNA20 ILE-278</scope>
</reference>
<reference key="25">
    <citation type="journal article" date="2006" name="Eur. J. Hum. Genet.">
        <title>A novel missense mutation in ACTG1 causes dominant deafness in a Norwegian DFNA20/26 family, but ACTG1 mutations are not frequent among families with hereditary hearing impairment.</title>
        <authorList>
            <person name="Rendtorff N.D."/>
            <person name="Zhu M."/>
            <person name="Fagerheim T."/>
            <person name="Antal T.L."/>
            <person name="Jones M."/>
            <person name="Teslovich T.M."/>
            <person name="Gillanders E.M."/>
            <person name="Barmada M."/>
            <person name="Teig E."/>
            <person name="Trent J.M."/>
            <person name="Friderici K.H."/>
            <person name="Stephan D.A."/>
            <person name="Tranebjaerg L."/>
        </authorList>
    </citation>
    <scope>VARIANT DFNA20 ALA-370</scope>
</reference>
<reference key="26">
    <citation type="journal article" date="2008" name="J. Genet. Genomics">
        <title>Novel ACTG1 mutation causing autosomal dominant non-syndromic hearing impairment in a Chinese family.</title>
        <authorList>
            <person name="Liu P."/>
            <person name="Li H."/>
            <person name="Ren X."/>
            <person name="Mao H."/>
            <person name="Zhu Q."/>
            <person name="Zhu Z."/>
            <person name="Yang R."/>
            <person name="Yuan W."/>
            <person name="Liu J."/>
            <person name="Wang Q."/>
            <person name="Liu M."/>
        </authorList>
    </citation>
    <scope>VARIANT DFNA20 VAL-122</scope>
</reference>
<reference key="27">
    <citation type="journal article" date="2009" name="Hum. Mol. Genet.">
        <title>In vivo and in vitro effects of two novel gamma-actin (ACTG1) mutations that cause DFNA20/26 hearing impairment.</title>
        <authorList>
            <person name="Morin M."/>
            <person name="Bryan K.E."/>
            <person name="Mayo-Merino F."/>
            <person name="Goodyear R."/>
            <person name="Mencia A."/>
            <person name="Modamio-Hoybjor S."/>
            <person name="del Castillo I."/>
            <person name="Cabalka J.M."/>
            <person name="Richardson G."/>
            <person name="Moreno F."/>
            <person name="Rubenstein P.A."/>
            <person name="Moreno-Pelayo M.A."/>
        </authorList>
    </citation>
    <scope>VARIANTS DFNA20 ASN-118 AND LYS-241</scope>
</reference>
<reference key="28">
    <citation type="journal article" date="2012" name="Nat. Genet.">
        <title>De novo mutations in the actin genes ACTB and ACTG1 cause Baraitser-Winter syndrome.</title>
        <authorList>
            <person name="Riviere J.B."/>
            <person name="van Bon B.W."/>
            <person name="Hoischen A."/>
            <person name="Kholmanskikh S.S."/>
            <person name="O'Roak B.J."/>
            <person name="Gilissen C."/>
            <person name="Gijsen S."/>
            <person name="Sullivan C.T."/>
            <person name="Christian S.L."/>
            <person name="Abdul-Rahman O.A."/>
            <person name="Atkin J.F."/>
            <person name="Chassaing N."/>
            <person name="Drouin-Garraud V."/>
            <person name="Fry A.E."/>
            <person name="Fryns J.P."/>
            <person name="Gripp K.W."/>
            <person name="Kempers M."/>
            <person name="Kleefstra T."/>
            <person name="Mancini G.M."/>
            <person name="Nowaczyk M.J."/>
            <person name="van Ravenswaaij-Arts C.M."/>
            <person name="Roscioli T."/>
            <person name="Marble M."/>
            <person name="Rosenfeld J.A."/>
            <person name="Siu V.M."/>
            <person name="de Vries B.B."/>
            <person name="Shendure J."/>
            <person name="Verloes A."/>
            <person name="Veltman J.A."/>
            <person name="Brunner H.G."/>
            <person name="Ross M.E."/>
            <person name="Pilz D.T."/>
            <person name="Dobyns W.B."/>
        </authorList>
    </citation>
    <scope>VARIANTS BRWS2 ILE-120; VAL-135; PHE-155; LYS-203; TRP-254 AND TRP-256</scope>
</reference>
<reference key="29">
    <citation type="journal article" date="2012" name="Orphanet J. Rare Dis.">
        <title>Targeted massive parallel sequencing: the effective detection of novel causative mutations associated with hearing loss in small families.</title>
        <authorList>
            <person name="Baek J.I."/>
            <person name="Oh S.K."/>
            <person name="Kim D.B."/>
            <person name="Choi S.Y."/>
            <person name="Kim U.K."/>
            <person name="Lee K.Y."/>
            <person name="Lee S.H."/>
        </authorList>
    </citation>
    <scope>VARIANT DFNA20 HIS-187</scope>
</reference>
<reference key="30">
    <citation type="journal article" date="2014" name="J. Transl. Med.">
        <title>Targeted genomic capture and massively parallel sequencing to identify novel variants causing Chinese hereditary hearing loss.</title>
        <authorList>
            <person name="Wei Q."/>
            <person name="Zhu H."/>
            <person name="Qian X."/>
            <person name="Chen Z."/>
            <person name="Yao J."/>
            <person name="Lu Y."/>
            <person name="Cao X."/>
            <person name="Xing G."/>
        </authorList>
    </citation>
    <scope>VARIANT DFNA20 LYS-316</scope>
</reference>
<reference key="31">
    <citation type="journal article" date="2017" name="Hum. Mutat.">
        <title>A recurrent de novo mutation in ACTG1 causes isolated ocular coloboma.</title>
        <authorList>
            <consortium name="UK10K"/>
            <person name="Rainger J."/>
            <person name="Williamson K.A."/>
            <person name="Soares D.C."/>
            <person name="Truch J."/>
            <person name="Kurian D."/>
            <person name="Gillessen-Kaesbach G."/>
            <person name="Seawright A."/>
            <person name="Prendergast J."/>
            <person name="Halachev M."/>
            <person name="Wheeler A."/>
            <person name="McTeir L."/>
            <person name="Gill A.C."/>
            <person name="van Heyningen V."/>
            <person name="Davey M.G."/>
            <person name="FitzPatrick D.R."/>
        </authorList>
    </citation>
    <scope>VARIANT LEU-70</scope>
    <scope>CHARACTERIZATION OF VARIANT LEU-70</scope>
    <scope>INTERACTION WITH CAPZB; TWF1; COFILIN AND PROFILIN</scope>
    <scope>SUBCELLULAR LOCATION</scope>
</reference>
<keyword id="KW-0002">3D-structure</keyword>
<keyword id="KW-0007">Acetylation</keyword>
<keyword id="KW-0067">ATP-binding</keyword>
<keyword id="KW-0963">Cytoplasm</keyword>
<keyword id="KW-0206">Cytoskeleton</keyword>
<keyword id="KW-0209">Deafness</keyword>
<keyword id="KW-0903">Direct protein sequencing</keyword>
<keyword id="KW-0225">Disease variant</keyword>
<keyword id="KW-0378">Hydrolase</keyword>
<keyword id="KW-0991">Intellectual disability</keyword>
<keyword id="KW-1017">Isopeptide bond</keyword>
<keyword id="KW-0488">Methylation</keyword>
<keyword id="KW-1010">Non-syndromic deafness</keyword>
<keyword id="KW-0547">Nucleotide-binding</keyword>
<keyword id="KW-0558">Oxidation</keyword>
<keyword id="KW-1267">Proteomics identification</keyword>
<keyword id="KW-1185">Reference proteome</keyword>
<name>ACTG_HUMAN</name>
<protein>
    <recommendedName>
        <fullName>Actin, cytoplasmic 2</fullName>
        <ecNumber evidence="2">3.6.4.-</ecNumber>
    </recommendedName>
    <alternativeName>
        <fullName>Gamma-actin</fullName>
    </alternativeName>
    <component>
        <recommendedName>
            <fullName>Actin, cytoplasmic 2, N-terminally processed</fullName>
        </recommendedName>
    </component>
</protein>
<organism>
    <name type="scientific">Homo sapiens</name>
    <name type="common">Human</name>
    <dbReference type="NCBI Taxonomy" id="9606"/>
    <lineage>
        <taxon>Eukaryota</taxon>
        <taxon>Metazoa</taxon>
        <taxon>Chordata</taxon>
        <taxon>Craniata</taxon>
        <taxon>Vertebrata</taxon>
        <taxon>Euteleostomi</taxon>
        <taxon>Mammalia</taxon>
        <taxon>Eutheria</taxon>
        <taxon>Euarchontoglires</taxon>
        <taxon>Primates</taxon>
        <taxon>Haplorrhini</taxon>
        <taxon>Catarrhini</taxon>
        <taxon>Hominidae</taxon>
        <taxon>Homo</taxon>
    </lineage>
</organism>
<evidence type="ECO:0000250" key="1">
    <source>
        <dbReference type="UniProtKB" id="P63260"/>
    </source>
</evidence>
<evidence type="ECO:0000250" key="2">
    <source>
        <dbReference type="UniProtKB" id="P68137"/>
    </source>
</evidence>
<evidence type="ECO:0000269" key="3">
    <source>
    </source>
</evidence>
<evidence type="ECO:0000269" key="4">
    <source>
    </source>
</evidence>
<evidence type="ECO:0000269" key="5">
    <source>
    </source>
</evidence>
<evidence type="ECO:0000269" key="6">
    <source>
    </source>
</evidence>
<evidence type="ECO:0000269" key="7">
    <source>
    </source>
</evidence>
<evidence type="ECO:0000269" key="8">
    <source>
    </source>
</evidence>
<evidence type="ECO:0000269" key="9">
    <source>
    </source>
</evidence>
<evidence type="ECO:0000269" key="10">
    <source>
    </source>
</evidence>
<evidence type="ECO:0000269" key="11">
    <source>
    </source>
</evidence>
<evidence type="ECO:0000269" key="12">
    <source>
    </source>
</evidence>
<evidence type="ECO:0000269" key="13">
    <source>
    </source>
</evidence>
<evidence type="ECO:0000269" key="14">
    <source>
    </source>
</evidence>
<evidence type="ECO:0000269" key="15">
    <source>
    </source>
</evidence>
<evidence type="ECO:0000269" key="16">
    <source>
    </source>
</evidence>
<evidence type="ECO:0000269" key="17">
    <source>
    </source>
</evidence>
<evidence type="ECO:0000269" key="18">
    <source>
    </source>
</evidence>
<evidence type="ECO:0000269" key="19">
    <source ref="7"/>
</evidence>
<evidence type="ECO:0000269" key="20">
    <source ref="8"/>
</evidence>
<evidence type="ECO:0000305" key="21"/>
<evidence type="ECO:0000305" key="22">
    <source>
    </source>
</evidence>
<evidence type="ECO:0000305" key="23">
    <source>
    </source>
</evidence>
<evidence type="ECO:0000305" key="24">
    <source>
    </source>
</evidence>
<evidence type="ECO:0007744" key="25">
    <source>
    </source>
</evidence>
<evidence type="ECO:0007744" key="26">
    <source>
    </source>
</evidence>
<evidence type="ECO:0007744" key="27">
    <source>
    </source>
</evidence>
<evidence type="ECO:0007744" key="28">
    <source>
    </source>
</evidence>
<evidence type="ECO:0007829" key="29">
    <source>
        <dbReference type="PDB" id="6WK2"/>
    </source>
</evidence>
<evidence type="ECO:0007829" key="30">
    <source>
        <dbReference type="PDB" id="7NVM"/>
    </source>
</evidence>
<evidence type="ECO:0007829" key="31">
    <source>
        <dbReference type="PDB" id="8DNF"/>
    </source>
</evidence>
<comment type="function">
    <text evidence="1 24">Actins are highly conserved proteins that are involved in various types of cell motility and are ubiquitously expressed in all eukaryotic cells. May play a role in the repair of noise-induced stereocilia gaps thereby maintains hearing sensitivity following loud noise damage (By similarity).</text>
</comment>
<comment type="catalytic activity">
    <reaction evidence="2">
        <text>ATP + H2O = ADP + phosphate + H(+)</text>
        <dbReference type="Rhea" id="RHEA:13065"/>
        <dbReference type="ChEBI" id="CHEBI:15377"/>
        <dbReference type="ChEBI" id="CHEBI:15378"/>
        <dbReference type="ChEBI" id="CHEBI:30616"/>
        <dbReference type="ChEBI" id="CHEBI:43474"/>
        <dbReference type="ChEBI" id="CHEBI:456216"/>
    </reaction>
</comment>
<comment type="subunit">
    <text evidence="13">Polymerization of globular actin (G-actin) leads to a structural filament (F-actin) in the form of a two-stranded helix. Each actin can bind to 4 others. Interacts with TWF1, CAPZB, cofilin and profilin (PubMed:28493397).</text>
</comment>
<comment type="interaction">
    <interactant intactId="EBI-351292">
        <id>P63261</id>
    </interactant>
    <interactant intactId="EBI-353944">
        <id>P60709</id>
        <label>ACTB</label>
    </interactant>
    <organismsDiffer>false</organismsDiffer>
    <experiments>16</experiments>
</comment>
<comment type="interaction">
    <interactant intactId="EBI-351292">
        <id>P63261</id>
    </interactant>
    <interactant intactId="EBI-351292">
        <id>P63261</id>
        <label>ACTG1</label>
    </interactant>
    <organismsDiffer>false</organismsDiffer>
    <experiments>8</experiments>
</comment>
<comment type="interaction">
    <interactant intactId="EBI-351292">
        <id>P63261</id>
    </interactant>
    <interactant intactId="EBI-1051165">
        <id>P40123</id>
        <label>CAP2</label>
    </interactant>
    <organismsDiffer>false</organismsDiffer>
    <experiments>13</experiments>
</comment>
<comment type="interaction">
    <interactant intactId="EBI-351292">
        <id>P63261</id>
    </interactant>
    <interactant intactId="EBI-3943153">
        <id>O60826</id>
        <label>CCDC22</label>
    </interactant>
    <organismsDiffer>false</organismsDiffer>
    <experiments>3</experiments>
</comment>
<comment type="interaction">
    <interactant intactId="EBI-351292">
        <id>P63261</id>
    </interactant>
    <interactant intactId="EBI-295634">
        <id>Q16543</id>
        <label>CDC37</label>
    </interactant>
    <organismsDiffer>false</organismsDiffer>
    <experiments>3</experiments>
</comment>
<comment type="interaction">
    <interactant intactId="EBI-351292">
        <id>P63261</id>
    </interactant>
    <interactant intactId="EBI-352733">
        <id>P23528</id>
        <label>CFL1</label>
    </interactant>
    <organismsDiffer>false</organismsDiffer>
    <experiments>10</experiments>
</comment>
<comment type="interaction">
    <interactant intactId="EBI-351292">
        <id>P63261</id>
    </interactant>
    <interactant intactId="EBI-10201319">
        <id>Q549N0</id>
        <label>CFL2</label>
    </interactant>
    <organismsDiffer>false</organismsDiffer>
    <experiments>5</experiments>
</comment>
<comment type="interaction">
    <interactant intactId="EBI-351292">
        <id>P63261</id>
    </interactant>
    <interactant intactId="EBI-351218">
        <id>Q9Y281</id>
        <label>CFL2</label>
    </interactant>
    <organismsDiffer>false</organismsDiffer>
    <experiments>10</experiments>
</comment>
<comment type="interaction">
    <interactant intactId="EBI-351292">
        <id>P63261</id>
    </interactant>
    <interactant intactId="EBI-745191">
        <id>P60981</id>
        <label>DSTN</label>
    </interactant>
    <organismsDiffer>false</organismsDiffer>
    <experiments>8</experiments>
</comment>
<comment type="interaction">
    <interactant intactId="EBI-351292">
        <id>P63261</id>
    </interactant>
    <interactant intactId="EBI-2339219">
        <id>Q08426</id>
        <label>EHHADH</label>
    </interactant>
    <organismsDiffer>false</organismsDiffer>
    <experiments>4</experiments>
</comment>
<comment type="interaction">
    <interactant intactId="EBI-351292">
        <id>P63261</id>
    </interactant>
    <interactant intactId="EBI-466029">
        <id>P42858</id>
        <label>HTT</label>
    </interactant>
    <organismsDiffer>false</organismsDiffer>
    <experiments>16</experiments>
</comment>
<comment type="interaction">
    <interactant intactId="EBI-351292">
        <id>P63261</id>
    </interactant>
    <interactant intactId="EBI-744248">
        <id>P40692</id>
        <label>MLH1</label>
    </interactant>
    <organismsDiffer>false</organismsDiffer>
    <experiments>6</experiments>
</comment>
<comment type="interaction">
    <interactant intactId="EBI-351292">
        <id>P63261</id>
    </interactant>
    <interactant intactId="EBI-741158">
        <id>Q96HA8</id>
        <label>NTAQ1</label>
    </interactant>
    <organismsDiffer>false</organismsDiffer>
    <experiments>7</experiments>
</comment>
<comment type="interaction">
    <interactant intactId="EBI-351292">
        <id>P63261</id>
    </interactant>
    <interactant intactId="EBI-9978131">
        <id>Q1KLZ0</id>
        <label>PS1TP5BP1</label>
    </interactant>
    <organismsDiffer>false</organismsDiffer>
    <experiments>3</experiments>
</comment>
<comment type="subcellular location">
    <subcellularLocation>
        <location evidence="13">Cytoplasm</location>
        <location evidence="13">Cytoskeleton</location>
    </subcellularLocation>
</comment>
<comment type="PTM">
    <text evidence="1">Oxidation of Met-44 and Met-47 by MICALs (MICAL1, MICAL2 or MICAL3) to form methionine sulfoxide promotes actin filament depolymerization. MICAL1 and MICAL2 produce the (R)-S-oxide form. The (R)-S-oxide form is reverted by MSRB1 and MSRB2, which promote actin repolymerization.</text>
</comment>
<comment type="PTM">
    <text evidence="11">Monomethylation at Lys-84 (K84me1) regulates actin-myosin interaction and actomyosin-dependent processes. Demethylation by ALKBH4 is required for maintaining actomyosin dynamics supporting normal cleavage furrow ingression during cytokinesis and cell migration.</text>
</comment>
<comment type="PTM">
    <molecule>Actin, cytoplasmic 2</molecule>
    <text evidence="18">N-terminal cleavage of acetylated methionine of immature cytoplasmic actin by ACTMAP.</text>
</comment>
<comment type="PTM">
    <molecule>Actin, cytoplasmic 2, N-terminally processed</molecule>
    <text evidence="14">N-terminal acetylation by NAA80 affects actin filament depolymerization and elongation, including elongation driven by formins (PubMed:29581253). In contrast, filament nucleation by the Arp2/3 complex is not affected (PubMed:29581253).</text>
</comment>
<comment type="PTM">
    <text evidence="16">Methylated at His-73 by SETD3.</text>
</comment>
<comment type="PTM">
    <text evidence="22 23">(Microbial infection) Monomeric actin is cross-linked by V.cholerae toxins RtxA and VgrG1 in case of infection: bacterial toxins mediate the cross-link between Lys-50 of one monomer and Glu-270 of another actin monomer, resulting in formation of highly toxic actin oligomers that cause cell rounding (PubMed:19015515). The toxin can be highly efficient at very low concentrations by acting on formin homology family proteins: toxic actin oligomers bind with high affinity to formins and adversely affect both nucleation and elongation abilities of formins, causing their potent inhibition in both profilin-dependent and independent manners (PubMed:26228148).</text>
</comment>
<comment type="disease" evidence="4 5 6 7 8 10 12 17">
    <disease id="DI-00846">
        <name>Deafness, autosomal dominant, 20</name>
        <acronym>DFNA20</acronym>
        <description>A form of non-syndromic sensorineural hearing loss. Sensorineural deafness results from damage to the neural receptors of the inner ear, the nerve pathways to the brain, or the area of the brain that receives sound information.</description>
        <dbReference type="MIM" id="604717"/>
    </disease>
    <text>The disease is caused by variants affecting the gene represented in this entry.</text>
</comment>
<comment type="disease" evidence="9">
    <disease id="DI-03417">
        <name>Baraitser-Winter syndrome 2</name>
        <acronym>BRWS2</acronym>
        <description>A rare developmental disorder characterized by the combination of congenital ptosis, high-arched eyebrows, hypertelorism, ocular colobomata, and a brain malformation consisting of anterior-predominant lissencephaly. Other typical features include postnatal short stature and microcephaly, intellectual disability, seizures, and hearing loss.</description>
        <dbReference type="MIM" id="614583"/>
    </disease>
    <text>The disease is caused by variants affecting the gene represented in this entry.</text>
</comment>
<comment type="disease">
    <text evidence="13">Defects in ACTG1 has been found in a patient with isolated coloboma, a defect of the eye characterized by the absence of ocular structures due to abnormal morphogenesis of the optic cup and stalk, and the fusion of the fetal fissure (optic fissure). Isolated colobomas may be associated with an abnormally small eye (microphthalmia) or small cornea.</text>
</comment>
<comment type="miscellaneous">
    <text>In vertebrates 3 main groups of actin isoforms, alpha, beta and gamma have been identified. The alpha actins are found in muscle tissues and are a major constituent of the contractile apparatus. The beta and gamma actins coexist in most cell types as components of the cytoskeleton and as mediators of internal cell motility.</text>
</comment>
<comment type="similarity">
    <text evidence="21">Belongs to the actin family.</text>
</comment>
<comment type="online information" name="Mendelian genes actin, gamma 1 (ACTG1)">
    <link uri="https://databases.lovd.nl/shared/genes/ACTG1"/>
    <text>Leiden Open Variation Database (LOVD)</text>
</comment>
<proteinExistence type="evidence at protein level"/>